<proteinExistence type="inferred from homology"/>
<accession>A7NJH8</accession>
<comment type="function">
    <text evidence="1">Involved in the biosynthesis of branched-chain amino acids (BCAA). Catalyzes an alkyl-migration followed by a ketol-acid reduction of (S)-2-acetolactate (S2AL) to yield (R)-2,3-dihydroxy-isovalerate. In the isomerase reaction, S2AL is rearranged via a Mg-dependent methyl migration to produce 3-hydroxy-3-methyl-2-ketobutyrate (HMKB). In the reductase reaction, this 2-ketoacid undergoes a metal-dependent reduction by NADPH to yield (R)-2,3-dihydroxy-isovalerate.</text>
</comment>
<comment type="catalytic activity">
    <reaction evidence="1">
        <text>(2R)-2,3-dihydroxy-3-methylbutanoate + NADP(+) = (2S)-2-acetolactate + NADPH + H(+)</text>
        <dbReference type="Rhea" id="RHEA:22068"/>
        <dbReference type="ChEBI" id="CHEBI:15378"/>
        <dbReference type="ChEBI" id="CHEBI:49072"/>
        <dbReference type="ChEBI" id="CHEBI:57783"/>
        <dbReference type="ChEBI" id="CHEBI:58349"/>
        <dbReference type="ChEBI" id="CHEBI:58476"/>
        <dbReference type="EC" id="1.1.1.86"/>
    </reaction>
</comment>
<comment type="catalytic activity">
    <reaction evidence="1">
        <text>(2R,3R)-2,3-dihydroxy-3-methylpentanoate + NADP(+) = (S)-2-ethyl-2-hydroxy-3-oxobutanoate + NADPH + H(+)</text>
        <dbReference type="Rhea" id="RHEA:13493"/>
        <dbReference type="ChEBI" id="CHEBI:15378"/>
        <dbReference type="ChEBI" id="CHEBI:49256"/>
        <dbReference type="ChEBI" id="CHEBI:49258"/>
        <dbReference type="ChEBI" id="CHEBI:57783"/>
        <dbReference type="ChEBI" id="CHEBI:58349"/>
        <dbReference type="EC" id="1.1.1.86"/>
    </reaction>
</comment>
<comment type="cofactor">
    <cofactor evidence="1">
        <name>Mg(2+)</name>
        <dbReference type="ChEBI" id="CHEBI:18420"/>
    </cofactor>
    <text evidence="1">Binds 2 magnesium ions per subunit.</text>
</comment>
<comment type="pathway">
    <text evidence="1">Amino-acid biosynthesis; L-isoleucine biosynthesis; L-isoleucine from 2-oxobutanoate: step 2/4.</text>
</comment>
<comment type="pathway">
    <text evidence="1">Amino-acid biosynthesis; L-valine biosynthesis; L-valine from pyruvate: step 2/4.</text>
</comment>
<comment type="similarity">
    <text evidence="1">Belongs to the ketol-acid reductoisomerase family.</text>
</comment>
<name>ILVC_ROSCS</name>
<organism>
    <name type="scientific">Roseiflexus castenholzii (strain DSM 13941 / HLO8)</name>
    <dbReference type="NCBI Taxonomy" id="383372"/>
    <lineage>
        <taxon>Bacteria</taxon>
        <taxon>Bacillati</taxon>
        <taxon>Chloroflexota</taxon>
        <taxon>Chloroflexia</taxon>
        <taxon>Chloroflexales</taxon>
        <taxon>Roseiflexineae</taxon>
        <taxon>Roseiflexaceae</taxon>
        <taxon>Roseiflexus</taxon>
    </lineage>
</organism>
<reference key="1">
    <citation type="submission" date="2007-08" db="EMBL/GenBank/DDBJ databases">
        <title>Complete sequence of Roseiflexus castenholzii DSM 13941.</title>
        <authorList>
            <consortium name="US DOE Joint Genome Institute"/>
            <person name="Copeland A."/>
            <person name="Lucas S."/>
            <person name="Lapidus A."/>
            <person name="Barry K."/>
            <person name="Glavina del Rio T."/>
            <person name="Dalin E."/>
            <person name="Tice H."/>
            <person name="Pitluck S."/>
            <person name="Thompson L.S."/>
            <person name="Brettin T."/>
            <person name="Bruce D."/>
            <person name="Detter J.C."/>
            <person name="Han C."/>
            <person name="Tapia R."/>
            <person name="Schmutz J."/>
            <person name="Larimer F."/>
            <person name="Land M."/>
            <person name="Hauser L."/>
            <person name="Kyrpides N."/>
            <person name="Mikhailova N."/>
            <person name="Bryant D.A."/>
            <person name="Hanada S."/>
            <person name="Tsukatani Y."/>
            <person name="Richardson P."/>
        </authorList>
    </citation>
    <scope>NUCLEOTIDE SEQUENCE [LARGE SCALE GENOMIC DNA]</scope>
    <source>
        <strain>DSM 13941 / HLO8</strain>
    </source>
</reference>
<gene>
    <name evidence="1" type="primary">ilvC</name>
    <name type="ordered locus">Rcas_1555</name>
</gene>
<feature type="chain" id="PRO_1000080641" description="Ketol-acid reductoisomerase (NADP(+))">
    <location>
        <begin position="1"/>
        <end position="340"/>
    </location>
</feature>
<feature type="domain" description="KARI N-terminal Rossmann" evidence="2">
    <location>
        <begin position="2"/>
        <end position="182"/>
    </location>
</feature>
<feature type="domain" description="KARI C-terminal knotted" evidence="3">
    <location>
        <begin position="183"/>
        <end position="328"/>
    </location>
</feature>
<feature type="active site" evidence="1">
    <location>
        <position position="108"/>
    </location>
</feature>
<feature type="binding site" evidence="1">
    <location>
        <begin position="25"/>
        <end position="28"/>
    </location>
    <ligand>
        <name>NADP(+)</name>
        <dbReference type="ChEBI" id="CHEBI:58349"/>
    </ligand>
</feature>
<feature type="binding site" evidence="1">
    <location>
        <position position="51"/>
    </location>
    <ligand>
        <name>NADP(+)</name>
        <dbReference type="ChEBI" id="CHEBI:58349"/>
    </ligand>
</feature>
<feature type="binding site" evidence="1">
    <location>
        <position position="53"/>
    </location>
    <ligand>
        <name>NADP(+)</name>
        <dbReference type="ChEBI" id="CHEBI:58349"/>
    </ligand>
</feature>
<feature type="binding site" evidence="1">
    <location>
        <begin position="83"/>
        <end position="86"/>
    </location>
    <ligand>
        <name>NADP(+)</name>
        <dbReference type="ChEBI" id="CHEBI:58349"/>
    </ligand>
</feature>
<feature type="binding site" evidence="1">
    <location>
        <position position="134"/>
    </location>
    <ligand>
        <name>NADP(+)</name>
        <dbReference type="ChEBI" id="CHEBI:58349"/>
    </ligand>
</feature>
<feature type="binding site" evidence="1">
    <location>
        <position position="191"/>
    </location>
    <ligand>
        <name>Mg(2+)</name>
        <dbReference type="ChEBI" id="CHEBI:18420"/>
        <label>1</label>
    </ligand>
</feature>
<feature type="binding site" evidence="1">
    <location>
        <position position="191"/>
    </location>
    <ligand>
        <name>Mg(2+)</name>
        <dbReference type="ChEBI" id="CHEBI:18420"/>
        <label>2</label>
    </ligand>
</feature>
<feature type="binding site" evidence="1">
    <location>
        <position position="195"/>
    </location>
    <ligand>
        <name>Mg(2+)</name>
        <dbReference type="ChEBI" id="CHEBI:18420"/>
        <label>1</label>
    </ligand>
</feature>
<feature type="binding site" evidence="1">
    <location>
        <position position="227"/>
    </location>
    <ligand>
        <name>Mg(2+)</name>
        <dbReference type="ChEBI" id="CHEBI:18420"/>
        <label>2</label>
    </ligand>
</feature>
<feature type="binding site" evidence="1">
    <location>
        <position position="231"/>
    </location>
    <ligand>
        <name>Mg(2+)</name>
        <dbReference type="ChEBI" id="CHEBI:18420"/>
        <label>2</label>
    </ligand>
</feature>
<feature type="binding site" evidence="1">
    <location>
        <position position="252"/>
    </location>
    <ligand>
        <name>substrate</name>
    </ligand>
</feature>
<evidence type="ECO:0000255" key="1">
    <source>
        <dbReference type="HAMAP-Rule" id="MF_00435"/>
    </source>
</evidence>
<evidence type="ECO:0000255" key="2">
    <source>
        <dbReference type="PROSITE-ProRule" id="PRU01197"/>
    </source>
</evidence>
<evidence type="ECO:0000255" key="3">
    <source>
        <dbReference type="PROSITE-ProRule" id="PRU01198"/>
    </source>
</evidence>
<keyword id="KW-0028">Amino-acid biosynthesis</keyword>
<keyword id="KW-0100">Branched-chain amino acid biosynthesis</keyword>
<keyword id="KW-0460">Magnesium</keyword>
<keyword id="KW-0479">Metal-binding</keyword>
<keyword id="KW-0521">NADP</keyword>
<keyword id="KW-0560">Oxidoreductase</keyword>
<keyword id="KW-1185">Reference proteome</keyword>
<sequence length="340" mass="36753">MANIYYENHADLARLAGRTIAVIGFGSQGHAHALNLKESGCDVIVGLYQGSKSWSKAEGLGLKVLPVAEAAKEAQIVMLALPDTAQAAIYRDAIGPHMTPGKTLMFAHGFNIRFGQIVPPEGVDVSMVAPKAPGHRVREVYTQGGGVPALVAVHQDASGNALADALAYARGLGCTRAGVIETTFAEETETDLFGEQVVLCGGVSALVKAAFETLVEAGYQPEVAYFECMHELKLIVDLFYQGGLNYMRYSVSDTAEWGDYTAGPKIITDETRATMKRILADIQSGAFAEDWIEENHNGRPRFNAYRTRDIAHPIEQVGRELRRMMPFVNPREVVPGEGGA</sequence>
<dbReference type="EC" id="1.1.1.86" evidence="1"/>
<dbReference type="EMBL" id="CP000804">
    <property type="protein sequence ID" value="ABU57648.1"/>
    <property type="molecule type" value="Genomic_DNA"/>
</dbReference>
<dbReference type="RefSeq" id="WP_012120076.1">
    <property type="nucleotide sequence ID" value="NC_009767.1"/>
</dbReference>
<dbReference type="SMR" id="A7NJH8"/>
<dbReference type="STRING" id="383372.Rcas_1555"/>
<dbReference type="KEGG" id="rca:Rcas_1555"/>
<dbReference type="eggNOG" id="COG0059">
    <property type="taxonomic scope" value="Bacteria"/>
</dbReference>
<dbReference type="HOGENOM" id="CLU_033821_0_1_0"/>
<dbReference type="OrthoDB" id="9804088at2"/>
<dbReference type="UniPathway" id="UPA00047">
    <property type="reaction ID" value="UER00056"/>
</dbReference>
<dbReference type="UniPathway" id="UPA00049">
    <property type="reaction ID" value="UER00060"/>
</dbReference>
<dbReference type="Proteomes" id="UP000000263">
    <property type="component" value="Chromosome"/>
</dbReference>
<dbReference type="GO" id="GO:0005829">
    <property type="term" value="C:cytosol"/>
    <property type="evidence" value="ECO:0007669"/>
    <property type="project" value="TreeGrafter"/>
</dbReference>
<dbReference type="GO" id="GO:0004455">
    <property type="term" value="F:ketol-acid reductoisomerase activity"/>
    <property type="evidence" value="ECO:0007669"/>
    <property type="project" value="UniProtKB-UniRule"/>
</dbReference>
<dbReference type="GO" id="GO:0000287">
    <property type="term" value="F:magnesium ion binding"/>
    <property type="evidence" value="ECO:0007669"/>
    <property type="project" value="UniProtKB-UniRule"/>
</dbReference>
<dbReference type="GO" id="GO:0050661">
    <property type="term" value="F:NADP binding"/>
    <property type="evidence" value="ECO:0007669"/>
    <property type="project" value="InterPro"/>
</dbReference>
<dbReference type="GO" id="GO:0009097">
    <property type="term" value="P:isoleucine biosynthetic process"/>
    <property type="evidence" value="ECO:0007669"/>
    <property type="project" value="UniProtKB-UniRule"/>
</dbReference>
<dbReference type="GO" id="GO:0009099">
    <property type="term" value="P:L-valine biosynthetic process"/>
    <property type="evidence" value="ECO:0007669"/>
    <property type="project" value="UniProtKB-UniRule"/>
</dbReference>
<dbReference type="FunFam" id="3.40.50.720:FF:000023">
    <property type="entry name" value="Ketol-acid reductoisomerase (NADP(+))"/>
    <property type="match status" value="1"/>
</dbReference>
<dbReference type="Gene3D" id="6.10.240.10">
    <property type="match status" value="1"/>
</dbReference>
<dbReference type="Gene3D" id="3.40.50.720">
    <property type="entry name" value="NAD(P)-binding Rossmann-like Domain"/>
    <property type="match status" value="1"/>
</dbReference>
<dbReference type="HAMAP" id="MF_00435">
    <property type="entry name" value="IlvC"/>
    <property type="match status" value="1"/>
</dbReference>
<dbReference type="InterPro" id="IPR008927">
    <property type="entry name" value="6-PGluconate_DH-like_C_sf"/>
</dbReference>
<dbReference type="InterPro" id="IPR013023">
    <property type="entry name" value="KARI"/>
</dbReference>
<dbReference type="InterPro" id="IPR000506">
    <property type="entry name" value="KARI_C"/>
</dbReference>
<dbReference type="InterPro" id="IPR013116">
    <property type="entry name" value="KARI_N"/>
</dbReference>
<dbReference type="InterPro" id="IPR014359">
    <property type="entry name" value="KARI_prok"/>
</dbReference>
<dbReference type="InterPro" id="IPR036291">
    <property type="entry name" value="NAD(P)-bd_dom_sf"/>
</dbReference>
<dbReference type="NCBIfam" id="TIGR00465">
    <property type="entry name" value="ilvC"/>
    <property type="match status" value="1"/>
</dbReference>
<dbReference type="NCBIfam" id="NF004017">
    <property type="entry name" value="PRK05479.1"/>
    <property type="match status" value="1"/>
</dbReference>
<dbReference type="NCBIfam" id="NF009940">
    <property type="entry name" value="PRK13403.1"/>
    <property type="match status" value="1"/>
</dbReference>
<dbReference type="PANTHER" id="PTHR21371">
    <property type="entry name" value="KETOL-ACID REDUCTOISOMERASE, MITOCHONDRIAL"/>
    <property type="match status" value="1"/>
</dbReference>
<dbReference type="PANTHER" id="PTHR21371:SF1">
    <property type="entry name" value="KETOL-ACID REDUCTOISOMERASE, MITOCHONDRIAL"/>
    <property type="match status" value="1"/>
</dbReference>
<dbReference type="Pfam" id="PF01450">
    <property type="entry name" value="KARI_C"/>
    <property type="match status" value="1"/>
</dbReference>
<dbReference type="Pfam" id="PF07991">
    <property type="entry name" value="KARI_N"/>
    <property type="match status" value="1"/>
</dbReference>
<dbReference type="PIRSF" id="PIRSF000116">
    <property type="entry name" value="IlvC_gammaproteo"/>
    <property type="match status" value="1"/>
</dbReference>
<dbReference type="SUPFAM" id="SSF48179">
    <property type="entry name" value="6-phosphogluconate dehydrogenase C-terminal domain-like"/>
    <property type="match status" value="1"/>
</dbReference>
<dbReference type="SUPFAM" id="SSF51735">
    <property type="entry name" value="NAD(P)-binding Rossmann-fold domains"/>
    <property type="match status" value="1"/>
</dbReference>
<dbReference type="PROSITE" id="PS51851">
    <property type="entry name" value="KARI_C"/>
    <property type="match status" value="1"/>
</dbReference>
<dbReference type="PROSITE" id="PS51850">
    <property type="entry name" value="KARI_N"/>
    <property type="match status" value="1"/>
</dbReference>
<protein>
    <recommendedName>
        <fullName evidence="1">Ketol-acid reductoisomerase (NADP(+))</fullName>
        <shortName evidence="1">KARI</shortName>
        <ecNumber evidence="1">1.1.1.86</ecNumber>
    </recommendedName>
    <alternativeName>
        <fullName evidence="1">Acetohydroxy-acid isomeroreductase</fullName>
        <shortName evidence="1">AHIR</shortName>
    </alternativeName>
    <alternativeName>
        <fullName evidence="1">Alpha-keto-beta-hydroxylacyl reductoisomerase</fullName>
    </alternativeName>
    <alternativeName>
        <fullName evidence="1">Ketol-acid reductoisomerase type 1</fullName>
    </alternativeName>
    <alternativeName>
        <fullName evidence="1">Ketol-acid reductoisomerase type I</fullName>
    </alternativeName>
</protein>